<organism>
    <name type="scientific">Vibrio parahaemolyticus serotype O3:K6 (strain RIMD 2210633)</name>
    <dbReference type="NCBI Taxonomy" id="223926"/>
    <lineage>
        <taxon>Bacteria</taxon>
        <taxon>Pseudomonadati</taxon>
        <taxon>Pseudomonadota</taxon>
        <taxon>Gammaproteobacteria</taxon>
        <taxon>Vibrionales</taxon>
        <taxon>Vibrionaceae</taxon>
        <taxon>Vibrio</taxon>
    </lineage>
</organism>
<evidence type="ECO:0000255" key="1">
    <source>
        <dbReference type="HAMAP-Rule" id="MF_00817"/>
    </source>
</evidence>
<evidence type="ECO:0000256" key="2">
    <source>
        <dbReference type="SAM" id="MobiDB-lite"/>
    </source>
</evidence>
<protein>
    <recommendedName>
        <fullName evidence="1">NADPH-dependent 7-cyano-7-deazaguanine reductase</fullName>
        <ecNumber evidence="1">1.7.1.13</ecNumber>
    </recommendedName>
    <alternativeName>
        <fullName evidence="1">7-cyano-7-carbaguanine reductase</fullName>
    </alternativeName>
    <alternativeName>
        <fullName evidence="1">NADPH-dependent nitrile oxidoreductase</fullName>
    </alternativeName>
    <alternativeName>
        <fullName evidence="1">PreQ(0) reductase</fullName>
    </alternativeName>
</protein>
<keyword id="KW-0963">Cytoplasm</keyword>
<keyword id="KW-0521">NADP</keyword>
<keyword id="KW-0560">Oxidoreductase</keyword>
<keyword id="KW-0671">Queuosine biosynthesis</keyword>
<name>QUEF_VIBPA</name>
<accession>Q87RS6</accession>
<gene>
    <name evidence="1" type="primary">queF</name>
    <name type="ordered locus">VP0701</name>
</gene>
<comment type="function">
    <text evidence="1">Catalyzes the NADPH-dependent reduction of 7-cyano-7-deazaguanine (preQ0) to 7-aminomethyl-7-deazaguanine (preQ1).</text>
</comment>
<comment type="catalytic activity">
    <reaction evidence="1">
        <text>7-aminomethyl-7-carbaguanine + 2 NADP(+) = 7-cyano-7-deazaguanine + 2 NADPH + 3 H(+)</text>
        <dbReference type="Rhea" id="RHEA:13409"/>
        <dbReference type="ChEBI" id="CHEBI:15378"/>
        <dbReference type="ChEBI" id="CHEBI:45075"/>
        <dbReference type="ChEBI" id="CHEBI:57783"/>
        <dbReference type="ChEBI" id="CHEBI:58349"/>
        <dbReference type="ChEBI" id="CHEBI:58703"/>
        <dbReference type="EC" id="1.7.1.13"/>
    </reaction>
</comment>
<comment type="pathway">
    <text evidence="1">tRNA modification; tRNA-queuosine biosynthesis.</text>
</comment>
<comment type="subunit">
    <text evidence="1">Homodimer.</text>
</comment>
<comment type="subcellular location">
    <subcellularLocation>
        <location evidence="1">Cytoplasm</location>
    </subcellularLocation>
</comment>
<comment type="similarity">
    <text evidence="1">Belongs to the GTP cyclohydrolase I family. QueF type 2 subfamily.</text>
</comment>
<feature type="chain" id="PRO_0000163064" description="NADPH-dependent 7-cyano-7-deazaguanine reductase">
    <location>
        <begin position="1"/>
        <end position="281"/>
    </location>
</feature>
<feature type="region of interest" description="Disordered" evidence="2">
    <location>
        <begin position="261"/>
        <end position="281"/>
    </location>
</feature>
<feature type="active site" description="Thioimide intermediate" evidence="1">
    <location>
        <position position="188"/>
    </location>
</feature>
<feature type="active site" description="Proton donor" evidence="1">
    <location>
        <position position="195"/>
    </location>
</feature>
<feature type="binding site" evidence="1">
    <location>
        <begin position="87"/>
        <end position="89"/>
    </location>
    <ligand>
        <name>substrate</name>
    </ligand>
</feature>
<feature type="binding site" evidence="1">
    <location>
        <begin position="89"/>
        <end position="90"/>
    </location>
    <ligand>
        <name>NADPH</name>
        <dbReference type="ChEBI" id="CHEBI:57783"/>
    </ligand>
</feature>
<feature type="binding site" evidence="1">
    <location>
        <begin position="227"/>
        <end position="228"/>
    </location>
    <ligand>
        <name>substrate</name>
    </ligand>
</feature>
<feature type="binding site" evidence="1">
    <location>
        <begin position="256"/>
        <end position="257"/>
    </location>
    <ligand>
        <name>NADPH</name>
        <dbReference type="ChEBI" id="CHEBI:57783"/>
    </ligand>
</feature>
<sequence>MSKYSDAKELAGLTLGKKTEYANQYDASLLQPVPRSLNRDDLELGDTLPFLGHDIWTLYELSWLNSKGLPQVAVGEVYIPATSANLIESKSFKLYLNSYNQTRFASWEEVAERLTQDLSACAGEKVLVEVNPVGHYTNQPIVTMEGECIDDQDIEINSYDFDADLLAGAAGEDQVEEVLHSHLLKSNCLITNQPDWGSVEIRYQGAKIDREKLLRYLVSFREHNEFHEQCVERIFTDLMKYCQPNKLTVFARYTRRGGLDINPYRSTEQDKPAHNHRMARQ</sequence>
<proteinExistence type="inferred from homology"/>
<reference key="1">
    <citation type="journal article" date="2003" name="Lancet">
        <title>Genome sequence of Vibrio parahaemolyticus: a pathogenic mechanism distinct from that of V. cholerae.</title>
        <authorList>
            <person name="Makino K."/>
            <person name="Oshima K."/>
            <person name="Kurokawa K."/>
            <person name="Yokoyama K."/>
            <person name="Uda T."/>
            <person name="Tagomori K."/>
            <person name="Iijima Y."/>
            <person name="Najima M."/>
            <person name="Nakano M."/>
            <person name="Yamashita A."/>
            <person name="Kubota Y."/>
            <person name="Kimura S."/>
            <person name="Yasunaga T."/>
            <person name="Honda T."/>
            <person name="Shinagawa H."/>
            <person name="Hattori M."/>
            <person name="Iida T."/>
        </authorList>
    </citation>
    <scope>NUCLEOTIDE SEQUENCE [LARGE SCALE GENOMIC DNA]</scope>
    <source>
        <strain>RIMD 2210633</strain>
    </source>
</reference>
<dbReference type="EC" id="1.7.1.13" evidence="1"/>
<dbReference type="EMBL" id="BA000031">
    <property type="protein sequence ID" value="BAC58964.1"/>
    <property type="molecule type" value="Genomic_DNA"/>
</dbReference>
<dbReference type="RefSeq" id="NP_797080.1">
    <property type="nucleotide sequence ID" value="NC_004603.1"/>
</dbReference>
<dbReference type="RefSeq" id="WP_005459155.1">
    <property type="nucleotide sequence ID" value="NC_004603.1"/>
</dbReference>
<dbReference type="SMR" id="Q87RS6"/>
<dbReference type="GeneID" id="1188176"/>
<dbReference type="KEGG" id="vpa:VP0701"/>
<dbReference type="PATRIC" id="fig|223926.6.peg.670"/>
<dbReference type="eggNOG" id="COG0780">
    <property type="taxonomic scope" value="Bacteria"/>
</dbReference>
<dbReference type="eggNOG" id="COG2904">
    <property type="taxonomic scope" value="Bacteria"/>
</dbReference>
<dbReference type="HOGENOM" id="CLU_054738_0_0_6"/>
<dbReference type="UniPathway" id="UPA00392"/>
<dbReference type="Proteomes" id="UP000002493">
    <property type="component" value="Chromosome 1"/>
</dbReference>
<dbReference type="GO" id="GO:0005737">
    <property type="term" value="C:cytoplasm"/>
    <property type="evidence" value="ECO:0007669"/>
    <property type="project" value="UniProtKB-SubCell"/>
</dbReference>
<dbReference type="GO" id="GO:0033739">
    <property type="term" value="F:preQ1 synthase activity"/>
    <property type="evidence" value="ECO:0007669"/>
    <property type="project" value="UniProtKB-UniRule"/>
</dbReference>
<dbReference type="GO" id="GO:0008616">
    <property type="term" value="P:queuosine biosynthetic process"/>
    <property type="evidence" value="ECO:0007669"/>
    <property type="project" value="UniProtKB-UniRule"/>
</dbReference>
<dbReference type="GO" id="GO:0006400">
    <property type="term" value="P:tRNA modification"/>
    <property type="evidence" value="ECO:0007669"/>
    <property type="project" value="UniProtKB-UniRule"/>
</dbReference>
<dbReference type="Gene3D" id="3.30.1130.10">
    <property type="match status" value="2"/>
</dbReference>
<dbReference type="HAMAP" id="MF_00817">
    <property type="entry name" value="QueF_type2"/>
    <property type="match status" value="1"/>
</dbReference>
<dbReference type="InterPro" id="IPR043133">
    <property type="entry name" value="GTP-CH-I_C/QueF"/>
</dbReference>
<dbReference type="InterPro" id="IPR050084">
    <property type="entry name" value="NADPH_dep_7-cyano-7-deazaG_red"/>
</dbReference>
<dbReference type="InterPro" id="IPR029500">
    <property type="entry name" value="QueF"/>
</dbReference>
<dbReference type="InterPro" id="IPR029139">
    <property type="entry name" value="QueF_N"/>
</dbReference>
<dbReference type="InterPro" id="IPR016428">
    <property type="entry name" value="QueF_type2"/>
</dbReference>
<dbReference type="NCBIfam" id="TIGR03138">
    <property type="entry name" value="QueF"/>
    <property type="match status" value="1"/>
</dbReference>
<dbReference type="PANTHER" id="PTHR34354">
    <property type="entry name" value="NADPH-DEPENDENT 7-CYANO-7-DEAZAGUANINE REDUCTASE"/>
    <property type="match status" value="1"/>
</dbReference>
<dbReference type="PANTHER" id="PTHR34354:SF1">
    <property type="entry name" value="NADPH-DEPENDENT 7-CYANO-7-DEAZAGUANINE REDUCTASE"/>
    <property type="match status" value="1"/>
</dbReference>
<dbReference type="Pfam" id="PF14489">
    <property type="entry name" value="QueF"/>
    <property type="match status" value="1"/>
</dbReference>
<dbReference type="Pfam" id="PF14819">
    <property type="entry name" value="QueF_N"/>
    <property type="match status" value="1"/>
</dbReference>
<dbReference type="PIRSF" id="PIRSF004750">
    <property type="entry name" value="Nitrile_oxidored_YqcD_prd"/>
    <property type="match status" value="1"/>
</dbReference>
<dbReference type="SUPFAM" id="SSF55620">
    <property type="entry name" value="Tetrahydrobiopterin biosynthesis enzymes-like"/>
    <property type="match status" value="1"/>
</dbReference>